<comment type="function">
    <text evidence="1">PPIases accelerate the folding of proteins. It catalyzes the cis-trans isomerization of proline imidic peptide bonds in oligopeptides (By similarity).</text>
</comment>
<comment type="catalytic activity">
    <reaction>
        <text>[protein]-peptidylproline (omega=180) = [protein]-peptidylproline (omega=0)</text>
        <dbReference type="Rhea" id="RHEA:16237"/>
        <dbReference type="Rhea" id="RHEA-COMP:10747"/>
        <dbReference type="Rhea" id="RHEA-COMP:10748"/>
        <dbReference type="ChEBI" id="CHEBI:83833"/>
        <dbReference type="ChEBI" id="CHEBI:83834"/>
        <dbReference type="EC" id="5.2.1.8"/>
    </reaction>
</comment>
<comment type="subcellular location">
    <subcellularLocation>
        <location evidence="1">Nucleus</location>
    </subcellularLocation>
</comment>
<comment type="similarity">
    <text evidence="3">Belongs to the cyclophilin-type PPIase family. PPIase H subfamily.</text>
</comment>
<comment type="sequence caution" evidence="3">
    <conflict type="erroneous gene model prediction">
        <sequence resource="EMBL-CDS" id="CBF84775"/>
    </conflict>
</comment>
<comment type="sequence caution" evidence="3">
    <conflict type="erroneous gene model prediction">
        <sequence resource="EMBL-CDS" id="EAA66837"/>
    </conflict>
</comment>
<protein>
    <recommendedName>
        <fullName>Peptidyl-prolyl cis-trans isomerase H</fullName>
        <shortName>PPIase H</shortName>
        <ecNumber>5.2.1.8</ecNumber>
    </recommendedName>
    <alternativeName>
        <fullName>Rotamase H</fullName>
    </alternativeName>
</protein>
<keyword id="KW-0413">Isomerase</keyword>
<keyword id="KW-0539">Nucleus</keyword>
<keyword id="KW-1185">Reference proteome</keyword>
<keyword id="KW-0697">Rotamase</keyword>
<dbReference type="EC" id="5.2.1.8"/>
<dbReference type="EMBL" id="AACD01000175">
    <property type="protein sequence ID" value="EAA66837.1"/>
    <property type="status" value="ALT_SEQ"/>
    <property type="molecule type" value="Genomic_DNA"/>
</dbReference>
<dbReference type="EMBL" id="BN001307">
    <property type="protein sequence ID" value="CBF84775.1"/>
    <property type="status" value="ALT_SEQ"/>
    <property type="molecule type" value="Genomic_DNA"/>
</dbReference>
<dbReference type="RefSeq" id="XP_868802.1">
    <property type="nucleotide sequence ID" value="XM_863709.1"/>
</dbReference>
<dbReference type="SMR" id="Q5AQL0"/>
<dbReference type="STRING" id="227321.Q5AQL0"/>
<dbReference type="KEGG" id="ani:ANIA_09420"/>
<dbReference type="VEuPathDB" id="FungiDB:AN9420"/>
<dbReference type="eggNOG" id="KOG0879">
    <property type="taxonomic scope" value="Eukaryota"/>
</dbReference>
<dbReference type="HOGENOM" id="CLU_012062_39_1_1"/>
<dbReference type="InParanoid" id="Q5AQL0"/>
<dbReference type="OrthoDB" id="193499at2759"/>
<dbReference type="Proteomes" id="UP000000560">
    <property type="component" value="Chromosome VII"/>
</dbReference>
<dbReference type="GO" id="GO:0005737">
    <property type="term" value="C:cytoplasm"/>
    <property type="evidence" value="ECO:0000318"/>
    <property type="project" value="GO_Central"/>
</dbReference>
<dbReference type="GO" id="GO:0043231">
    <property type="term" value="C:intracellular membrane-bounded organelle"/>
    <property type="evidence" value="ECO:0000318"/>
    <property type="project" value="GO_Central"/>
</dbReference>
<dbReference type="GO" id="GO:0005634">
    <property type="term" value="C:nucleus"/>
    <property type="evidence" value="ECO:0007669"/>
    <property type="project" value="UniProtKB-SubCell"/>
</dbReference>
<dbReference type="GO" id="GO:0016018">
    <property type="term" value="F:cyclosporin A binding"/>
    <property type="evidence" value="ECO:0000318"/>
    <property type="project" value="GO_Central"/>
</dbReference>
<dbReference type="GO" id="GO:0003755">
    <property type="term" value="F:peptidyl-prolyl cis-trans isomerase activity"/>
    <property type="evidence" value="ECO:0000318"/>
    <property type="project" value="GO_Central"/>
</dbReference>
<dbReference type="GO" id="GO:0006457">
    <property type="term" value="P:protein folding"/>
    <property type="evidence" value="ECO:0000318"/>
    <property type="project" value="GO_Central"/>
</dbReference>
<dbReference type="CDD" id="cd01926">
    <property type="entry name" value="cyclophilin_ABH_like"/>
    <property type="match status" value="1"/>
</dbReference>
<dbReference type="FunFam" id="2.40.100.10:FF:000035">
    <property type="entry name" value="Peptidyl-prolyl cis-trans isomerase"/>
    <property type="match status" value="1"/>
</dbReference>
<dbReference type="Gene3D" id="2.40.100.10">
    <property type="entry name" value="Cyclophilin-like"/>
    <property type="match status" value="1"/>
</dbReference>
<dbReference type="InterPro" id="IPR029000">
    <property type="entry name" value="Cyclophilin-like_dom_sf"/>
</dbReference>
<dbReference type="InterPro" id="IPR024936">
    <property type="entry name" value="Cyclophilin-type_PPIase"/>
</dbReference>
<dbReference type="InterPro" id="IPR020892">
    <property type="entry name" value="Cyclophilin-type_PPIase_CS"/>
</dbReference>
<dbReference type="InterPro" id="IPR002130">
    <property type="entry name" value="Cyclophilin-type_PPIase_dom"/>
</dbReference>
<dbReference type="PANTHER" id="PTHR11071">
    <property type="entry name" value="PEPTIDYL-PROLYL CIS-TRANS ISOMERASE"/>
    <property type="match status" value="1"/>
</dbReference>
<dbReference type="PANTHER" id="PTHR11071:SF561">
    <property type="entry name" value="PEPTIDYL-PROLYL CIS-TRANS ISOMERASE D-RELATED"/>
    <property type="match status" value="1"/>
</dbReference>
<dbReference type="Pfam" id="PF00160">
    <property type="entry name" value="Pro_isomerase"/>
    <property type="match status" value="1"/>
</dbReference>
<dbReference type="PIRSF" id="PIRSF001467">
    <property type="entry name" value="Peptidylpro_ismrse"/>
    <property type="match status" value="1"/>
</dbReference>
<dbReference type="PRINTS" id="PR00153">
    <property type="entry name" value="CSAPPISMRASE"/>
</dbReference>
<dbReference type="SUPFAM" id="SSF50891">
    <property type="entry name" value="Cyclophilin-like"/>
    <property type="match status" value="1"/>
</dbReference>
<dbReference type="PROSITE" id="PS00170">
    <property type="entry name" value="CSA_PPIASE_1"/>
    <property type="match status" value="1"/>
</dbReference>
<dbReference type="PROSITE" id="PS50072">
    <property type="entry name" value="CSA_PPIASE_2"/>
    <property type="match status" value="1"/>
</dbReference>
<organism>
    <name type="scientific">Emericella nidulans (strain FGSC A4 / ATCC 38163 / CBS 112.46 / NRRL 194 / M139)</name>
    <name type="common">Aspergillus nidulans</name>
    <dbReference type="NCBI Taxonomy" id="227321"/>
    <lineage>
        <taxon>Eukaryota</taxon>
        <taxon>Fungi</taxon>
        <taxon>Dikarya</taxon>
        <taxon>Ascomycota</taxon>
        <taxon>Pezizomycotina</taxon>
        <taxon>Eurotiomycetes</taxon>
        <taxon>Eurotiomycetidae</taxon>
        <taxon>Eurotiales</taxon>
        <taxon>Aspergillaceae</taxon>
        <taxon>Aspergillus</taxon>
        <taxon>Aspergillus subgen. Nidulantes</taxon>
    </lineage>
</organism>
<proteinExistence type="inferred from homology"/>
<sequence>MSNTGSAVPQTTSSNPIVFFDVALGGEPLGRLKLELFADVTPRTAENFRQFCTGESKNQQGRPQGYKGSKFHRVIKDFMIQGGDFVNGDGTGSCTIYGTPKFSDENFTLRHDRPGLLSMANSGPNTNGCQFFITTTATPFLNGKHVVFGQVIDGMDIVRMIENTRTTRDKPNQDVVIIQCGEM</sequence>
<reference key="1">
    <citation type="journal article" date="2005" name="Nature">
        <title>Sequencing of Aspergillus nidulans and comparative analysis with A. fumigatus and A. oryzae.</title>
        <authorList>
            <person name="Galagan J.E."/>
            <person name="Calvo S.E."/>
            <person name="Cuomo C."/>
            <person name="Ma L.-J."/>
            <person name="Wortman J.R."/>
            <person name="Batzoglou S."/>
            <person name="Lee S.-I."/>
            <person name="Bastuerkmen M."/>
            <person name="Spevak C.C."/>
            <person name="Clutterbuck J."/>
            <person name="Kapitonov V."/>
            <person name="Jurka J."/>
            <person name="Scazzocchio C."/>
            <person name="Farman M.L."/>
            <person name="Butler J."/>
            <person name="Purcell S."/>
            <person name="Harris S."/>
            <person name="Braus G.H."/>
            <person name="Draht O."/>
            <person name="Busch S."/>
            <person name="D'Enfert C."/>
            <person name="Bouchier C."/>
            <person name="Goldman G.H."/>
            <person name="Bell-Pedersen D."/>
            <person name="Griffiths-Jones S."/>
            <person name="Doonan J.H."/>
            <person name="Yu J."/>
            <person name="Vienken K."/>
            <person name="Pain A."/>
            <person name="Freitag M."/>
            <person name="Selker E.U."/>
            <person name="Archer D.B."/>
            <person name="Penalva M.A."/>
            <person name="Oakley B.R."/>
            <person name="Momany M."/>
            <person name="Tanaka T."/>
            <person name="Kumagai T."/>
            <person name="Asai K."/>
            <person name="Machida M."/>
            <person name="Nierman W.C."/>
            <person name="Denning D.W."/>
            <person name="Caddick M.X."/>
            <person name="Hynes M."/>
            <person name="Paoletti M."/>
            <person name="Fischer R."/>
            <person name="Miller B.L."/>
            <person name="Dyer P.S."/>
            <person name="Sachs M.S."/>
            <person name="Osmani S.A."/>
            <person name="Birren B.W."/>
        </authorList>
    </citation>
    <scope>NUCLEOTIDE SEQUENCE [LARGE SCALE GENOMIC DNA]</scope>
    <source>
        <strain>FGSC A4 / ATCC 38163 / CBS 112.46 / NRRL 194 / M139</strain>
    </source>
</reference>
<reference key="2">
    <citation type="journal article" date="2009" name="Fungal Genet. Biol.">
        <title>The 2008 update of the Aspergillus nidulans genome annotation: a community effort.</title>
        <authorList>
            <person name="Wortman J.R."/>
            <person name="Gilsenan J.M."/>
            <person name="Joardar V."/>
            <person name="Deegan J."/>
            <person name="Clutterbuck J."/>
            <person name="Andersen M.R."/>
            <person name="Archer D."/>
            <person name="Bencina M."/>
            <person name="Braus G."/>
            <person name="Coutinho P."/>
            <person name="von Dohren H."/>
            <person name="Doonan J."/>
            <person name="Driessen A.J."/>
            <person name="Durek P."/>
            <person name="Espeso E."/>
            <person name="Fekete E."/>
            <person name="Flipphi M."/>
            <person name="Estrada C.G."/>
            <person name="Geysens S."/>
            <person name="Goldman G."/>
            <person name="de Groot P.W."/>
            <person name="Hansen K."/>
            <person name="Harris S.D."/>
            <person name="Heinekamp T."/>
            <person name="Helmstaedt K."/>
            <person name="Henrissat B."/>
            <person name="Hofmann G."/>
            <person name="Homan T."/>
            <person name="Horio T."/>
            <person name="Horiuchi H."/>
            <person name="James S."/>
            <person name="Jones M."/>
            <person name="Karaffa L."/>
            <person name="Karanyi Z."/>
            <person name="Kato M."/>
            <person name="Keller N."/>
            <person name="Kelly D.E."/>
            <person name="Kiel J.A."/>
            <person name="Kim J.M."/>
            <person name="van der Klei I.J."/>
            <person name="Klis F.M."/>
            <person name="Kovalchuk A."/>
            <person name="Krasevec N."/>
            <person name="Kubicek C.P."/>
            <person name="Liu B."/>
            <person name="Maccabe A."/>
            <person name="Meyer V."/>
            <person name="Mirabito P."/>
            <person name="Miskei M."/>
            <person name="Mos M."/>
            <person name="Mullins J."/>
            <person name="Nelson D.R."/>
            <person name="Nielsen J."/>
            <person name="Oakley B.R."/>
            <person name="Osmani S.A."/>
            <person name="Pakula T."/>
            <person name="Paszewski A."/>
            <person name="Paulsen I."/>
            <person name="Pilsyk S."/>
            <person name="Pocsi I."/>
            <person name="Punt P.J."/>
            <person name="Ram A.F."/>
            <person name="Ren Q."/>
            <person name="Robellet X."/>
            <person name="Robson G."/>
            <person name="Seiboth B."/>
            <person name="van Solingen P."/>
            <person name="Specht T."/>
            <person name="Sun J."/>
            <person name="Taheri-Talesh N."/>
            <person name="Takeshita N."/>
            <person name="Ussery D."/>
            <person name="vanKuyk P.A."/>
            <person name="Visser H."/>
            <person name="van de Vondervoort P.J."/>
            <person name="de Vries R.P."/>
            <person name="Walton J."/>
            <person name="Xiang X."/>
            <person name="Xiong Y."/>
            <person name="Zeng A.P."/>
            <person name="Brandt B.W."/>
            <person name="Cornell M.J."/>
            <person name="van den Hondel C.A."/>
            <person name="Visser J."/>
            <person name="Oliver S.G."/>
            <person name="Turner G."/>
        </authorList>
    </citation>
    <scope>GENOME REANNOTATION</scope>
    <source>
        <strain>FGSC A4 / ATCC 38163 / CBS 112.46 / NRRL 194 / M139</strain>
    </source>
</reference>
<reference key="3">
    <citation type="submission" date="2006-02" db="UniProtKB">
        <authorList>
            <person name="Pemberton T.J."/>
        </authorList>
    </citation>
    <scope>REVISION OF GENE MODEL</scope>
</reference>
<evidence type="ECO:0000250" key="1"/>
<evidence type="ECO:0000255" key="2">
    <source>
        <dbReference type="PROSITE-ProRule" id="PRU00156"/>
    </source>
</evidence>
<evidence type="ECO:0000305" key="3"/>
<accession>Q5AQL0</accession>
<accession>C8VLV6</accession>
<name>PPIH_EMENI</name>
<gene>
    <name type="primary">cyp3</name>
    <name type="ORF">AN9420</name>
</gene>
<feature type="chain" id="PRO_0000232956" description="Peptidyl-prolyl cis-trans isomerase H">
    <location>
        <begin position="1"/>
        <end position="183"/>
    </location>
</feature>
<feature type="domain" description="PPIase cyclophilin-type" evidence="2">
    <location>
        <begin position="19"/>
        <end position="182"/>
    </location>
</feature>